<feature type="chain" id="PRO_1000075145" description="Elongation factor 4">
    <location>
        <begin position="1"/>
        <end position="599"/>
    </location>
</feature>
<feature type="domain" description="tr-type G">
    <location>
        <begin position="2"/>
        <end position="184"/>
    </location>
</feature>
<feature type="binding site" evidence="1">
    <location>
        <begin position="14"/>
        <end position="19"/>
    </location>
    <ligand>
        <name>GTP</name>
        <dbReference type="ChEBI" id="CHEBI:37565"/>
    </ligand>
</feature>
<feature type="binding site" evidence="1">
    <location>
        <begin position="131"/>
        <end position="134"/>
    </location>
    <ligand>
        <name>GTP</name>
        <dbReference type="ChEBI" id="CHEBI:37565"/>
    </ligand>
</feature>
<organism>
    <name type="scientific">Salmonella arizonae (strain ATCC BAA-731 / CDC346-86 / RSK2980)</name>
    <dbReference type="NCBI Taxonomy" id="41514"/>
    <lineage>
        <taxon>Bacteria</taxon>
        <taxon>Pseudomonadati</taxon>
        <taxon>Pseudomonadota</taxon>
        <taxon>Gammaproteobacteria</taxon>
        <taxon>Enterobacterales</taxon>
        <taxon>Enterobacteriaceae</taxon>
        <taxon>Salmonella</taxon>
    </lineage>
</organism>
<comment type="function">
    <text evidence="1">Required for accurate and efficient protein synthesis under certain stress conditions. May act as a fidelity factor of the translation reaction, by catalyzing a one-codon backward translocation of tRNAs on improperly translocated ribosomes. Back-translocation proceeds from a post-translocation (POST) complex to a pre-translocation (PRE) complex, thus giving elongation factor G a second chance to translocate the tRNAs correctly. Binds to ribosomes in a GTP-dependent manner.</text>
</comment>
<comment type="catalytic activity">
    <reaction evidence="1">
        <text>GTP + H2O = GDP + phosphate + H(+)</text>
        <dbReference type="Rhea" id="RHEA:19669"/>
        <dbReference type="ChEBI" id="CHEBI:15377"/>
        <dbReference type="ChEBI" id="CHEBI:15378"/>
        <dbReference type="ChEBI" id="CHEBI:37565"/>
        <dbReference type="ChEBI" id="CHEBI:43474"/>
        <dbReference type="ChEBI" id="CHEBI:58189"/>
        <dbReference type="EC" id="3.6.5.n1"/>
    </reaction>
</comment>
<comment type="subcellular location">
    <subcellularLocation>
        <location evidence="1">Cell inner membrane</location>
        <topology evidence="1">Peripheral membrane protein</topology>
        <orientation evidence="1">Cytoplasmic side</orientation>
    </subcellularLocation>
</comment>
<comment type="similarity">
    <text evidence="1">Belongs to the TRAFAC class translation factor GTPase superfamily. Classic translation factor GTPase family. LepA subfamily.</text>
</comment>
<name>LEPA_SALAR</name>
<dbReference type="EC" id="3.6.5.n1" evidence="1"/>
<dbReference type="EMBL" id="CP000880">
    <property type="protein sequence ID" value="ABX20236.1"/>
    <property type="molecule type" value="Genomic_DNA"/>
</dbReference>
<dbReference type="SMR" id="A9MGX5"/>
<dbReference type="STRING" id="41514.SARI_00295"/>
<dbReference type="KEGG" id="ses:SARI_00295"/>
<dbReference type="HOGENOM" id="CLU_009995_3_3_6"/>
<dbReference type="Proteomes" id="UP000002084">
    <property type="component" value="Chromosome"/>
</dbReference>
<dbReference type="GO" id="GO:0005886">
    <property type="term" value="C:plasma membrane"/>
    <property type="evidence" value="ECO:0007669"/>
    <property type="project" value="UniProtKB-SubCell"/>
</dbReference>
<dbReference type="GO" id="GO:0005525">
    <property type="term" value="F:GTP binding"/>
    <property type="evidence" value="ECO:0007669"/>
    <property type="project" value="UniProtKB-UniRule"/>
</dbReference>
<dbReference type="GO" id="GO:0003924">
    <property type="term" value="F:GTPase activity"/>
    <property type="evidence" value="ECO:0007669"/>
    <property type="project" value="UniProtKB-UniRule"/>
</dbReference>
<dbReference type="GO" id="GO:0097216">
    <property type="term" value="F:guanosine tetraphosphate binding"/>
    <property type="evidence" value="ECO:0007669"/>
    <property type="project" value="UniProtKB-ARBA"/>
</dbReference>
<dbReference type="GO" id="GO:0043022">
    <property type="term" value="F:ribosome binding"/>
    <property type="evidence" value="ECO:0007669"/>
    <property type="project" value="UniProtKB-UniRule"/>
</dbReference>
<dbReference type="GO" id="GO:0003746">
    <property type="term" value="F:translation elongation factor activity"/>
    <property type="evidence" value="ECO:0007669"/>
    <property type="project" value="UniProtKB-UniRule"/>
</dbReference>
<dbReference type="GO" id="GO:0045727">
    <property type="term" value="P:positive regulation of translation"/>
    <property type="evidence" value="ECO:0007669"/>
    <property type="project" value="UniProtKB-UniRule"/>
</dbReference>
<dbReference type="CDD" id="cd03699">
    <property type="entry name" value="EF4_II"/>
    <property type="match status" value="1"/>
</dbReference>
<dbReference type="CDD" id="cd16260">
    <property type="entry name" value="EF4_III"/>
    <property type="match status" value="1"/>
</dbReference>
<dbReference type="CDD" id="cd01890">
    <property type="entry name" value="LepA"/>
    <property type="match status" value="1"/>
</dbReference>
<dbReference type="CDD" id="cd03709">
    <property type="entry name" value="lepA_C"/>
    <property type="match status" value="1"/>
</dbReference>
<dbReference type="FunFam" id="3.30.70.240:FF:000005">
    <property type="entry name" value="Elongation factor 4"/>
    <property type="match status" value="1"/>
</dbReference>
<dbReference type="FunFam" id="3.40.50.300:FF:000078">
    <property type="entry name" value="Elongation factor 4"/>
    <property type="match status" value="1"/>
</dbReference>
<dbReference type="FunFam" id="2.40.30.10:FF:000015">
    <property type="entry name" value="Translation factor GUF1, mitochondrial"/>
    <property type="match status" value="1"/>
</dbReference>
<dbReference type="FunFam" id="3.30.70.2570:FF:000001">
    <property type="entry name" value="Translation factor GUF1, mitochondrial"/>
    <property type="match status" value="1"/>
</dbReference>
<dbReference type="FunFam" id="3.30.70.870:FF:000004">
    <property type="entry name" value="Translation factor GUF1, mitochondrial"/>
    <property type="match status" value="1"/>
</dbReference>
<dbReference type="Gene3D" id="3.30.70.240">
    <property type="match status" value="1"/>
</dbReference>
<dbReference type="Gene3D" id="3.30.70.2570">
    <property type="entry name" value="Elongation factor 4, C-terminal domain"/>
    <property type="match status" value="1"/>
</dbReference>
<dbReference type="Gene3D" id="3.30.70.870">
    <property type="entry name" value="Elongation Factor G (Translational Gtpase), domain 3"/>
    <property type="match status" value="1"/>
</dbReference>
<dbReference type="Gene3D" id="3.40.50.300">
    <property type="entry name" value="P-loop containing nucleotide triphosphate hydrolases"/>
    <property type="match status" value="1"/>
</dbReference>
<dbReference type="Gene3D" id="2.40.30.10">
    <property type="entry name" value="Translation factors"/>
    <property type="match status" value="1"/>
</dbReference>
<dbReference type="HAMAP" id="MF_00071">
    <property type="entry name" value="LepA"/>
    <property type="match status" value="1"/>
</dbReference>
<dbReference type="InterPro" id="IPR006297">
    <property type="entry name" value="EF-4"/>
</dbReference>
<dbReference type="InterPro" id="IPR035647">
    <property type="entry name" value="EFG_III/V"/>
</dbReference>
<dbReference type="InterPro" id="IPR000640">
    <property type="entry name" value="EFG_V-like"/>
</dbReference>
<dbReference type="InterPro" id="IPR004161">
    <property type="entry name" value="EFTu-like_2"/>
</dbReference>
<dbReference type="InterPro" id="IPR031157">
    <property type="entry name" value="G_TR_CS"/>
</dbReference>
<dbReference type="InterPro" id="IPR038363">
    <property type="entry name" value="LepA_C_sf"/>
</dbReference>
<dbReference type="InterPro" id="IPR013842">
    <property type="entry name" value="LepA_CTD"/>
</dbReference>
<dbReference type="InterPro" id="IPR035654">
    <property type="entry name" value="LepA_IV"/>
</dbReference>
<dbReference type="InterPro" id="IPR027417">
    <property type="entry name" value="P-loop_NTPase"/>
</dbReference>
<dbReference type="InterPro" id="IPR005225">
    <property type="entry name" value="Small_GTP-bd"/>
</dbReference>
<dbReference type="InterPro" id="IPR000795">
    <property type="entry name" value="T_Tr_GTP-bd_dom"/>
</dbReference>
<dbReference type="NCBIfam" id="TIGR01393">
    <property type="entry name" value="lepA"/>
    <property type="match status" value="1"/>
</dbReference>
<dbReference type="NCBIfam" id="TIGR00231">
    <property type="entry name" value="small_GTP"/>
    <property type="match status" value="1"/>
</dbReference>
<dbReference type="PANTHER" id="PTHR43512:SF4">
    <property type="entry name" value="TRANSLATION FACTOR GUF1 HOMOLOG, CHLOROPLASTIC"/>
    <property type="match status" value="1"/>
</dbReference>
<dbReference type="PANTHER" id="PTHR43512">
    <property type="entry name" value="TRANSLATION FACTOR GUF1-RELATED"/>
    <property type="match status" value="1"/>
</dbReference>
<dbReference type="Pfam" id="PF00679">
    <property type="entry name" value="EFG_C"/>
    <property type="match status" value="1"/>
</dbReference>
<dbReference type="Pfam" id="PF00009">
    <property type="entry name" value="GTP_EFTU"/>
    <property type="match status" value="1"/>
</dbReference>
<dbReference type="Pfam" id="PF03144">
    <property type="entry name" value="GTP_EFTU_D2"/>
    <property type="match status" value="1"/>
</dbReference>
<dbReference type="Pfam" id="PF06421">
    <property type="entry name" value="LepA_C"/>
    <property type="match status" value="1"/>
</dbReference>
<dbReference type="PRINTS" id="PR00315">
    <property type="entry name" value="ELONGATNFCT"/>
</dbReference>
<dbReference type="SUPFAM" id="SSF54980">
    <property type="entry name" value="EF-G C-terminal domain-like"/>
    <property type="match status" value="2"/>
</dbReference>
<dbReference type="SUPFAM" id="SSF52540">
    <property type="entry name" value="P-loop containing nucleoside triphosphate hydrolases"/>
    <property type="match status" value="1"/>
</dbReference>
<dbReference type="PROSITE" id="PS00301">
    <property type="entry name" value="G_TR_1"/>
    <property type="match status" value="1"/>
</dbReference>
<dbReference type="PROSITE" id="PS51722">
    <property type="entry name" value="G_TR_2"/>
    <property type="match status" value="1"/>
</dbReference>
<sequence length="599" mass="66574">MKNIRNFSIIAHIDHGKSTLSDRIIQICGGLSDREMEAQVLDSMDLERERGITIKAQSVTLDFKASDGETYQLNFIDTPGHVDFSYEVSRSLAACEGALLVVDAGQGVEAQTLANCYTAMEMDLEVVPVLNKIDLPAADPERVAEEIEDIVGIDATDAVRCSAKTGVGVTDVLERLVRDIPPPQGDPDGPLQALIIDSWFDNYLGVVSLVRIKNGTMRKGDKIKVMSTGQTYNADRLGIFTPKQVDRTELKCGEVGWLVCAIKDILGAPVGDTLTSARNPAEKALPGFKKVKPQVYAGLFPVSSDDYESFRDALGKLSLNDASLFYEPENSSALGFGFRCGFLGLLHMEIIQERLEREYDLDLITTAPTVVYEVETTAKEIIYVDSPSKLPPLNNIYELREPIAECHMLLPQAYLGNVITLCIEKRGVQTNMVYHGNQVALTYEIPMAEVVLDFFDRLKSTSRGYASLDYNFKRFQASDMVRVDVLINNERVDALALITHRDNAQNRGRELVDKMKDLIPRQQFDIAIQAAIGTHIIARSTVKQLRKNVLAKCYGGDISRKKKLLQKQKEGKKRMKQIGNVELPQEAFLAILHVGKDNK</sequence>
<proteinExistence type="inferred from homology"/>
<keyword id="KW-0997">Cell inner membrane</keyword>
<keyword id="KW-1003">Cell membrane</keyword>
<keyword id="KW-0342">GTP-binding</keyword>
<keyword id="KW-0378">Hydrolase</keyword>
<keyword id="KW-0472">Membrane</keyword>
<keyword id="KW-0547">Nucleotide-binding</keyword>
<keyword id="KW-0648">Protein biosynthesis</keyword>
<keyword id="KW-1185">Reference proteome</keyword>
<accession>A9MGX5</accession>
<gene>
    <name evidence="1" type="primary">lepA</name>
    <name type="ordered locus">SARI_00295</name>
</gene>
<reference key="1">
    <citation type="submission" date="2007-11" db="EMBL/GenBank/DDBJ databases">
        <authorList>
            <consortium name="The Salmonella enterica serovar Arizonae Genome Sequencing Project"/>
            <person name="McClelland M."/>
            <person name="Sanderson E.K."/>
            <person name="Porwollik S."/>
            <person name="Spieth J."/>
            <person name="Clifton W.S."/>
            <person name="Fulton R."/>
            <person name="Chunyan W."/>
            <person name="Wollam A."/>
            <person name="Shah N."/>
            <person name="Pepin K."/>
            <person name="Bhonagiri V."/>
            <person name="Nash W."/>
            <person name="Johnson M."/>
            <person name="Thiruvilangam P."/>
            <person name="Wilson R."/>
        </authorList>
    </citation>
    <scope>NUCLEOTIDE SEQUENCE [LARGE SCALE GENOMIC DNA]</scope>
    <source>
        <strain>ATCC BAA-731 / CDC346-86 / RSK2980</strain>
    </source>
</reference>
<protein>
    <recommendedName>
        <fullName evidence="1">Elongation factor 4</fullName>
        <shortName evidence="1">EF-4</shortName>
        <ecNumber evidence="1">3.6.5.n1</ecNumber>
    </recommendedName>
    <alternativeName>
        <fullName evidence="1">Ribosomal back-translocase LepA</fullName>
    </alternativeName>
</protein>
<evidence type="ECO:0000255" key="1">
    <source>
        <dbReference type="HAMAP-Rule" id="MF_00071"/>
    </source>
</evidence>